<proteinExistence type="inferred from homology"/>
<accession>B5FSN0</accession>
<evidence type="ECO:0000255" key="1">
    <source>
        <dbReference type="HAMAP-Rule" id="MF_00044"/>
    </source>
</evidence>
<name>SYD_SALDC</name>
<protein>
    <recommendedName>
        <fullName evidence="1">Aspartate--tRNA ligase</fullName>
        <ecNumber evidence="1">6.1.1.12</ecNumber>
    </recommendedName>
    <alternativeName>
        <fullName evidence="1">Aspartyl-tRNA synthetase</fullName>
        <shortName evidence="1">AspRS</shortName>
    </alternativeName>
</protein>
<gene>
    <name evidence="1" type="primary">aspS</name>
    <name type="ordered locus">SeD_A1346</name>
</gene>
<sequence>MRTEYCGQLRLSHVGQQVTLCGWVNRRRDLGSLIFIDMRDREGIVQVFFDPDRADALKLASELRNEFCIQVTGTVRARDAKNVNADMATGEIEVLASSLTIINRADSLPLDANHVNTEEARLKYRYLDLRRPEMAQRLKTRAKITSLVRRFMDDHGFLDIETPMLTKATPEGARDYLVPSRVHKGKFYALPQSPQLFKQLLMMSGFDRYYQIVKCFRDEDLRADRQPEFTQIDVETSFMTAPQVREVMEALVRHLWLEVKGVDLGDFPVMTFAEAERRYGSDKPDLRNPMELVDVADLLKSVEFAVFAGPANDPKGRVAALRVPGGAQLSRKQIDDYGNFVKIYGAKGLAYIKVNERAKGLDGINSPVAKFLTADIVDAILERTGAQDGDMIFFGADNKKVVADALGALRLKLGKDLSLTDEDKWAPLWVIDFPMFEDDGEGGLTAMHHPFTAPRDMTASELKTAPEEAVANAYDMVINGYEVGGGSVRIHNGEMQQTVFGILGINEQEQREKFGFLLDALKYGTPPHAGLAFGLDRLTMLLTGTDNIRDVIAFPKTTAAACLMTEAPSFANQAALTELGIQVVKKAENN</sequence>
<feature type="chain" id="PRO_1000091036" description="Aspartate--tRNA ligase">
    <location>
        <begin position="1"/>
        <end position="590"/>
    </location>
</feature>
<feature type="region of interest" description="Aspartate" evidence="1">
    <location>
        <begin position="195"/>
        <end position="198"/>
    </location>
</feature>
<feature type="binding site" evidence="1">
    <location>
        <position position="171"/>
    </location>
    <ligand>
        <name>L-aspartate</name>
        <dbReference type="ChEBI" id="CHEBI:29991"/>
    </ligand>
</feature>
<feature type="binding site" evidence="1">
    <location>
        <begin position="217"/>
        <end position="219"/>
    </location>
    <ligand>
        <name>ATP</name>
        <dbReference type="ChEBI" id="CHEBI:30616"/>
    </ligand>
</feature>
<feature type="binding site" evidence="1">
    <location>
        <position position="217"/>
    </location>
    <ligand>
        <name>L-aspartate</name>
        <dbReference type="ChEBI" id="CHEBI:29991"/>
    </ligand>
</feature>
<feature type="binding site" evidence="1">
    <location>
        <position position="226"/>
    </location>
    <ligand>
        <name>ATP</name>
        <dbReference type="ChEBI" id="CHEBI:30616"/>
    </ligand>
</feature>
<feature type="binding site" evidence="1">
    <location>
        <position position="448"/>
    </location>
    <ligand>
        <name>L-aspartate</name>
        <dbReference type="ChEBI" id="CHEBI:29991"/>
    </ligand>
</feature>
<feature type="binding site" evidence="1">
    <location>
        <position position="482"/>
    </location>
    <ligand>
        <name>ATP</name>
        <dbReference type="ChEBI" id="CHEBI:30616"/>
    </ligand>
</feature>
<feature type="binding site" evidence="1">
    <location>
        <position position="489"/>
    </location>
    <ligand>
        <name>L-aspartate</name>
        <dbReference type="ChEBI" id="CHEBI:29991"/>
    </ligand>
</feature>
<feature type="binding site" evidence="1">
    <location>
        <begin position="534"/>
        <end position="537"/>
    </location>
    <ligand>
        <name>ATP</name>
        <dbReference type="ChEBI" id="CHEBI:30616"/>
    </ligand>
</feature>
<comment type="function">
    <text evidence="1">Catalyzes the attachment of L-aspartate to tRNA(Asp) in a two-step reaction: L-aspartate is first activated by ATP to form Asp-AMP and then transferred to the acceptor end of tRNA(Asp).</text>
</comment>
<comment type="catalytic activity">
    <reaction evidence="1">
        <text>tRNA(Asp) + L-aspartate + ATP = L-aspartyl-tRNA(Asp) + AMP + diphosphate</text>
        <dbReference type="Rhea" id="RHEA:19649"/>
        <dbReference type="Rhea" id="RHEA-COMP:9660"/>
        <dbReference type="Rhea" id="RHEA-COMP:9678"/>
        <dbReference type="ChEBI" id="CHEBI:29991"/>
        <dbReference type="ChEBI" id="CHEBI:30616"/>
        <dbReference type="ChEBI" id="CHEBI:33019"/>
        <dbReference type="ChEBI" id="CHEBI:78442"/>
        <dbReference type="ChEBI" id="CHEBI:78516"/>
        <dbReference type="ChEBI" id="CHEBI:456215"/>
        <dbReference type="EC" id="6.1.1.12"/>
    </reaction>
</comment>
<comment type="subunit">
    <text evidence="1">Homodimer.</text>
</comment>
<comment type="subcellular location">
    <subcellularLocation>
        <location evidence="1">Cytoplasm</location>
    </subcellularLocation>
</comment>
<comment type="similarity">
    <text evidence="1">Belongs to the class-II aminoacyl-tRNA synthetase family. Type 1 subfamily.</text>
</comment>
<keyword id="KW-0030">Aminoacyl-tRNA synthetase</keyword>
<keyword id="KW-0067">ATP-binding</keyword>
<keyword id="KW-0963">Cytoplasm</keyword>
<keyword id="KW-0436">Ligase</keyword>
<keyword id="KW-0547">Nucleotide-binding</keyword>
<keyword id="KW-0648">Protein biosynthesis</keyword>
<dbReference type="EC" id="6.1.1.12" evidence="1"/>
<dbReference type="EMBL" id="CP001144">
    <property type="protein sequence ID" value="ACH75785.1"/>
    <property type="molecule type" value="Genomic_DNA"/>
</dbReference>
<dbReference type="RefSeq" id="WP_001258629.1">
    <property type="nucleotide sequence ID" value="NC_011205.1"/>
</dbReference>
<dbReference type="SMR" id="B5FSN0"/>
<dbReference type="KEGG" id="sed:SeD_A1346"/>
<dbReference type="HOGENOM" id="CLU_014330_3_2_6"/>
<dbReference type="Proteomes" id="UP000008322">
    <property type="component" value="Chromosome"/>
</dbReference>
<dbReference type="GO" id="GO:0005737">
    <property type="term" value="C:cytoplasm"/>
    <property type="evidence" value="ECO:0007669"/>
    <property type="project" value="UniProtKB-SubCell"/>
</dbReference>
<dbReference type="GO" id="GO:0004815">
    <property type="term" value="F:aspartate-tRNA ligase activity"/>
    <property type="evidence" value="ECO:0007669"/>
    <property type="project" value="UniProtKB-UniRule"/>
</dbReference>
<dbReference type="GO" id="GO:0005524">
    <property type="term" value="F:ATP binding"/>
    <property type="evidence" value="ECO:0007669"/>
    <property type="project" value="UniProtKB-UniRule"/>
</dbReference>
<dbReference type="GO" id="GO:0003676">
    <property type="term" value="F:nucleic acid binding"/>
    <property type="evidence" value="ECO:0007669"/>
    <property type="project" value="InterPro"/>
</dbReference>
<dbReference type="GO" id="GO:0006422">
    <property type="term" value="P:aspartyl-tRNA aminoacylation"/>
    <property type="evidence" value="ECO:0007669"/>
    <property type="project" value="UniProtKB-UniRule"/>
</dbReference>
<dbReference type="CDD" id="cd00777">
    <property type="entry name" value="AspRS_core"/>
    <property type="match status" value="1"/>
</dbReference>
<dbReference type="CDD" id="cd04317">
    <property type="entry name" value="EcAspRS_like_N"/>
    <property type="match status" value="1"/>
</dbReference>
<dbReference type="FunFam" id="2.40.50.140:FF:000080">
    <property type="entry name" value="Aspartate--tRNA ligase"/>
    <property type="match status" value="1"/>
</dbReference>
<dbReference type="FunFam" id="3.30.1360.30:FF:000001">
    <property type="entry name" value="Aspartate--tRNA ligase"/>
    <property type="match status" value="1"/>
</dbReference>
<dbReference type="Gene3D" id="3.30.930.10">
    <property type="entry name" value="Bira Bifunctional Protein, Domain 2"/>
    <property type="match status" value="1"/>
</dbReference>
<dbReference type="Gene3D" id="3.30.1360.30">
    <property type="entry name" value="GAD-like domain"/>
    <property type="match status" value="1"/>
</dbReference>
<dbReference type="Gene3D" id="2.40.50.140">
    <property type="entry name" value="Nucleic acid-binding proteins"/>
    <property type="match status" value="1"/>
</dbReference>
<dbReference type="HAMAP" id="MF_00044">
    <property type="entry name" value="Asp_tRNA_synth_type1"/>
    <property type="match status" value="1"/>
</dbReference>
<dbReference type="InterPro" id="IPR004364">
    <property type="entry name" value="Aa-tRNA-synt_II"/>
</dbReference>
<dbReference type="InterPro" id="IPR006195">
    <property type="entry name" value="aa-tRNA-synth_II"/>
</dbReference>
<dbReference type="InterPro" id="IPR045864">
    <property type="entry name" value="aa-tRNA-synth_II/BPL/LPL"/>
</dbReference>
<dbReference type="InterPro" id="IPR004524">
    <property type="entry name" value="Asp-tRNA-ligase_1"/>
</dbReference>
<dbReference type="InterPro" id="IPR047089">
    <property type="entry name" value="Asp-tRNA-ligase_1_N"/>
</dbReference>
<dbReference type="InterPro" id="IPR002312">
    <property type="entry name" value="Asp/Asn-tRNA-synth_IIb"/>
</dbReference>
<dbReference type="InterPro" id="IPR047090">
    <property type="entry name" value="AspRS_core"/>
</dbReference>
<dbReference type="InterPro" id="IPR004115">
    <property type="entry name" value="GAD-like_sf"/>
</dbReference>
<dbReference type="InterPro" id="IPR029351">
    <property type="entry name" value="GAD_dom"/>
</dbReference>
<dbReference type="InterPro" id="IPR012340">
    <property type="entry name" value="NA-bd_OB-fold"/>
</dbReference>
<dbReference type="InterPro" id="IPR004365">
    <property type="entry name" value="NA-bd_OB_tRNA"/>
</dbReference>
<dbReference type="NCBIfam" id="TIGR00459">
    <property type="entry name" value="aspS_bact"/>
    <property type="match status" value="1"/>
</dbReference>
<dbReference type="NCBIfam" id="NF001750">
    <property type="entry name" value="PRK00476.1"/>
    <property type="match status" value="1"/>
</dbReference>
<dbReference type="PANTHER" id="PTHR22594:SF5">
    <property type="entry name" value="ASPARTATE--TRNA LIGASE, MITOCHONDRIAL"/>
    <property type="match status" value="1"/>
</dbReference>
<dbReference type="PANTHER" id="PTHR22594">
    <property type="entry name" value="ASPARTYL/LYSYL-TRNA SYNTHETASE"/>
    <property type="match status" value="1"/>
</dbReference>
<dbReference type="Pfam" id="PF02938">
    <property type="entry name" value="GAD"/>
    <property type="match status" value="1"/>
</dbReference>
<dbReference type="Pfam" id="PF00152">
    <property type="entry name" value="tRNA-synt_2"/>
    <property type="match status" value="1"/>
</dbReference>
<dbReference type="Pfam" id="PF01336">
    <property type="entry name" value="tRNA_anti-codon"/>
    <property type="match status" value="1"/>
</dbReference>
<dbReference type="PRINTS" id="PR01042">
    <property type="entry name" value="TRNASYNTHASP"/>
</dbReference>
<dbReference type="SUPFAM" id="SSF55681">
    <property type="entry name" value="Class II aaRS and biotin synthetases"/>
    <property type="match status" value="1"/>
</dbReference>
<dbReference type="SUPFAM" id="SSF55261">
    <property type="entry name" value="GAD domain-like"/>
    <property type="match status" value="1"/>
</dbReference>
<dbReference type="SUPFAM" id="SSF50249">
    <property type="entry name" value="Nucleic acid-binding proteins"/>
    <property type="match status" value="1"/>
</dbReference>
<dbReference type="PROSITE" id="PS50862">
    <property type="entry name" value="AA_TRNA_LIGASE_II"/>
    <property type="match status" value="1"/>
</dbReference>
<reference key="1">
    <citation type="journal article" date="2011" name="J. Bacteriol.">
        <title>Comparative genomics of 28 Salmonella enterica isolates: evidence for CRISPR-mediated adaptive sublineage evolution.</title>
        <authorList>
            <person name="Fricke W.F."/>
            <person name="Mammel M.K."/>
            <person name="McDermott P.F."/>
            <person name="Tartera C."/>
            <person name="White D.G."/>
            <person name="Leclerc J.E."/>
            <person name="Ravel J."/>
            <person name="Cebula T.A."/>
        </authorList>
    </citation>
    <scope>NUCLEOTIDE SEQUENCE [LARGE SCALE GENOMIC DNA]</scope>
    <source>
        <strain>CT_02021853</strain>
    </source>
</reference>
<organism>
    <name type="scientific">Salmonella dublin (strain CT_02021853)</name>
    <dbReference type="NCBI Taxonomy" id="439851"/>
    <lineage>
        <taxon>Bacteria</taxon>
        <taxon>Pseudomonadati</taxon>
        <taxon>Pseudomonadota</taxon>
        <taxon>Gammaproteobacteria</taxon>
        <taxon>Enterobacterales</taxon>
        <taxon>Enterobacteriaceae</taxon>
        <taxon>Salmonella</taxon>
    </lineage>
</organism>